<comment type="function">
    <text evidence="1">ESCRT-III-like protein involved in cytokinesis, nuclear envelope reassembly and endosomal tubulation (By similarity). Is required for efficient abscission during cytokinesis (By similarity). Involved in recruiting VPS4A and/or VPS4B to the midbody of dividing cells (By similarity). During late anaphase, involved in nuclear envelope reassembly and mitotic spindle disassembly together with the ESCRT-III complex: IST1 acts by mediating the recruitment of SPAST to the nuclear membrane, leading to microtubule severing (By similarity). Recruited to the reforming nuclear envelope (NE) during anaphase by LEMD2 (By similarity). Regulates early endosomal tubulation together with the ESCRT-III complex by mediating the recruitment of SPAST (By similarity).</text>
</comment>
<comment type="subunit">
    <text evidence="1">Interacts with CHMP1A, CHMP1B, VPS4A and VTA1. Interacts with SPAST, STAMBP, and USP8. May interact with VPS37B. May associate with the ESCRT-I complex. Interacts with MITD1, in competition with VSP4. Interacts with SPART (via MIT domain); leading to the recruitment of SPART to midbodies. Interacts with SPAST.</text>
</comment>
<comment type="subcellular location">
    <subcellularLocation>
        <location evidence="1">Cytoplasmic vesicle</location>
    </subcellularLocation>
    <subcellularLocation>
        <location evidence="1">Cytoplasm</location>
        <location evidence="1">Cytoskeleton</location>
        <location evidence="1">Microtubule organizing center</location>
        <location evidence="1">Centrosome</location>
    </subcellularLocation>
    <subcellularLocation>
        <location evidence="1">Midbody</location>
    </subcellularLocation>
    <subcellularLocation>
        <location evidence="1">Nucleus envelope</location>
    </subcellularLocation>
    <text evidence="1">Localizes to centrosome and midbody of dividing cells. Colocalized with SPART to the ends of Flemming bodies during cytokinesis. Localizes to the reforming nuclear envelope on chromatin disks during late anaphase.</text>
</comment>
<comment type="similarity">
    <text evidence="3">Belongs to the IST1 family.</text>
</comment>
<organism>
    <name type="scientific">Pongo abelii</name>
    <name type="common">Sumatran orangutan</name>
    <name type="synonym">Pongo pygmaeus abelii</name>
    <dbReference type="NCBI Taxonomy" id="9601"/>
    <lineage>
        <taxon>Eukaryota</taxon>
        <taxon>Metazoa</taxon>
        <taxon>Chordata</taxon>
        <taxon>Craniata</taxon>
        <taxon>Vertebrata</taxon>
        <taxon>Euteleostomi</taxon>
        <taxon>Mammalia</taxon>
        <taxon>Eutheria</taxon>
        <taxon>Euarchontoglires</taxon>
        <taxon>Primates</taxon>
        <taxon>Haplorrhini</taxon>
        <taxon>Catarrhini</taxon>
        <taxon>Hominidae</taxon>
        <taxon>Pongo</taxon>
    </lineage>
</organism>
<feature type="chain" id="PRO_0000274479" description="IST1 homolog">
    <location>
        <begin position="1"/>
        <end position="364"/>
    </location>
</feature>
<feature type="region of interest" description="Disordered" evidence="2">
    <location>
        <begin position="294"/>
        <end position="352"/>
    </location>
</feature>
<feature type="compositionally biased region" description="Low complexity" evidence="2">
    <location>
        <begin position="335"/>
        <end position="345"/>
    </location>
</feature>
<feature type="modified residue" description="Phosphoserine" evidence="1">
    <location>
        <position position="4"/>
    </location>
</feature>
<feature type="modified residue" description="Phosphotyrosine" evidence="1">
    <location>
        <position position="43"/>
    </location>
</feature>
<protein>
    <recommendedName>
        <fullName>IST1 homolog</fullName>
    </recommendedName>
    <alternativeName>
        <fullName evidence="1">Charged multivesicular body protein 8</fullName>
        <shortName evidence="1">CHMP8</shortName>
    </alternativeName>
</protein>
<keyword id="KW-0131">Cell cycle</keyword>
<keyword id="KW-0132">Cell division</keyword>
<keyword id="KW-0963">Cytoplasm</keyword>
<keyword id="KW-0968">Cytoplasmic vesicle</keyword>
<keyword id="KW-0206">Cytoskeleton</keyword>
<keyword id="KW-0539">Nucleus</keyword>
<keyword id="KW-0597">Phosphoprotein</keyword>
<keyword id="KW-1185">Reference proteome</keyword>
<gene>
    <name type="primary">IST1</name>
</gene>
<proteinExistence type="evidence at transcript level"/>
<sequence>MLGSGFKAERLRVNLRLVINRLKLLEKKKTELAQKARKEIADYLAAGKDERARIRVEHIIREDYLVEAMEILELYCDLLLARFGLIQSMKELDSGLAESVSTLIWAAPRLQSEVAELKIVADQLCAKYSKGYGKLCRTNQIGTVNDRLMHKLSVEAPPKILVERYLIEIAKNYNVPYEPDSVVMAEAPPGVETDLIDVGFTDDVKKGGPGRGGGGGFTAPVGGPEGTVPMPMPMPMPSANTPFSYPLPKGPSDFNGLPMGTYQAFPIIHPPQIPATPPSYESVDDINADKNISSAQIVGPGPKPEASAKLPSRPADNYDNFVLPELPSVPDTLPTASAGASTSASEDIDFDDLSRRFEELKKKT</sequence>
<name>IST1_PONAB</name>
<evidence type="ECO:0000250" key="1">
    <source>
        <dbReference type="UniProtKB" id="P53990"/>
    </source>
</evidence>
<evidence type="ECO:0000256" key="2">
    <source>
        <dbReference type="SAM" id="MobiDB-lite"/>
    </source>
</evidence>
<evidence type="ECO:0000305" key="3"/>
<reference key="1">
    <citation type="submission" date="2004-11" db="EMBL/GenBank/DDBJ databases">
        <authorList>
            <consortium name="The German cDNA consortium"/>
        </authorList>
    </citation>
    <scope>NUCLEOTIDE SEQUENCE [LARGE SCALE MRNA]</scope>
    <source>
        <tissue>Heart</tissue>
    </source>
</reference>
<dbReference type="EMBL" id="CR860522">
    <property type="protein sequence ID" value="CAH92648.1"/>
    <property type="molecule type" value="mRNA"/>
</dbReference>
<dbReference type="RefSeq" id="NP_001126550.1">
    <property type="nucleotide sequence ID" value="NM_001133078.1"/>
</dbReference>
<dbReference type="SMR" id="Q5R6G8"/>
<dbReference type="FunCoup" id="Q5R6G8">
    <property type="interactions" value="3222"/>
</dbReference>
<dbReference type="STRING" id="9601.ENSPPYP00000008494"/>
<dbReference type="GeneID" id="100173540"/>
<dbReference type="KEGG" id="pon:100173540"/>
<dbReference type="CTD" id="9798"/>
<dbReference type="eggNOG" id="KOG2027">
    <property type="taxonomic scope" value="Eukaryota"/>
</dbReference>
<dbReference type="InParanoid" id="Q5R6G8"/>
<dbReference type="OrthoDB" id="29853at2759"/>
<dbReference type="Proteomes" id="UP000001595">
    <property type="component" value="Unplaced"/>
</dbReference>
<dbReference type="GO" id="GO:0005813">
    <property type="term" value="C:centrosome"/>
    <property type="evidence" value="ECO:0007669"/>
    <property type="project" value="UniProtKB-SubCell"/>
</dbReference>
<dbReference type="GO" id="GO:0031410">
    <property type="term" value="C:cytoplasmic vesicle"/>
    <property type="evidence" value="ECO:0007669"/>
    <property type="project" value="UniProtKB-KW"/>
</dbReference>
<dbReference type="GO" id="GO:0030496">
    <property type="term" value="C:midbody"/>
    <property type="evidence" value="ECO:0007669"/>
    <property type="project" value="UniProtKB-SubCell"/>
</dbReference>
<dbReference type="GO" id="GO:0005635">
    <property type="term" value="C:nuclear envelope"/>
    <property type="evidence" value="ECO:0007669"/>
    <property type="project" value="UniProtKB-SubCell"/>
</dbReference>
<dbReference type="GO" id="GO:0051301">
    <property type="term" value="P:cell division"/>
    <property type="evidence" value="ECO:0007669"/>
    <property type="project" value="UniProtKB-KW"/>
</dbReference>
<dbReference type="GO" id="GO:0015031">
    <property type="term" value="P:protein transport"/>
    <property type="evidence" value="ECO:0007669"/>
    <property type="project" value="InterPro"/>
</dbReference>
<dbReference type="FunFam" id="1.20.1260.60:FF:000001">
    <property type="entry name" value="IST1 homolog isoform X1"/>
    <property type="match status" value="1"/>
</dbReference>
<dbReference type="Gene3D" id="1.20.1260.60">
    <property type="entry name" value="Vacuolar protein sorting-associated protein Ist1"/>
    <property type="match status" value="1"/>
</dbReference>
<dbReference type="InterPro" id="IPR005061">
    <property type="entry name" value="Ist1"/>
</dbReference>
<dbReference type="InterPro" id="IPR042277">
    <property type="entry name" value="IST1-like"/>
</dbReference>
<dbReference type="PANTHER" id="PTHR12161">
    <property type="entry name" value="IST1 FAMILY MEMBER"/>
    <property type="match status" value="1"/>
</dbReference>
<dbReference type="PANTHER" id="PTHR12161:SF56">
    <property type="entry name" value="IST1 HOMOLOG"/>
    <property type="match status" value="1"/>
</dbReference>
<dbReference type="Pfam" id="PF03398">
    <property type="entry name" value="Ist1"/>
    <property type="match status" value="1"/>
</dbReference>
<accession>Q5R6G8</accession>